<reference key="1">
    <citation type="journal article" date="2005" name="J. Bacteriol.">
        <title>Insights into genome plasticity and pathogenicity of the plant pathogenic Bacterium Xanthomonas campestris pv. vesicatoria revealed by the complete genome sequence.</title>
        <authorList>
            <person name="Thieme F."/>
            <person name="Koebnik R."/>
            <person name="Bekel T."/>
            <person name="Berger C."/>
            <person name="Boch J."/>
            <person name="Buettner D."/>
            <person name="Caldana C."/>
            <person name="Gaigalat L."/>
            <person name="Goesmann A."/>
            <person name="Kay S."/>
            <person name="Kirchner O."/>
            <person name="Lanz C."/>
            <person name="Linke B."/>
            <person name="McHardy A.C."/>
            <person name="Meyer F."/>
            <person name="Mittenhuber G."/>
            <person name="Nies D.H."/>
            <person name="Niesbach-Kloesgen U."/>
            <person name="Patschkowski T."/>
            <person name="Rueckert C."/>
            <person name="Rupp O."/>
            <person name="Schneiker S."/>
            <person name="Schuster S.C."/>
            <person name="Vorhoelter F.J."/>
            <person name="Weber E."/>
            <person name="Puehler A."/>
            <person name="Bonas U."/>
            <person name="Bartels D."/>
            <person name="Kaiser O."/>
        </authorList>
    </citation>
    <scope>NUCLEOTIDE SEQUENCE [LARGE SCALE GENOMIC DNA]</scope>
    <source>
        <strain>85-10</strain>
    </source>
</reference>
<keyword id="KW-0413">Isomerase</keyword>
<keyword id="KW-0460">Magnesium</keyword>
<keyword id="KW-0479">Metal-binding</keyword>
<keyword id="KW-0597">Phosphoprotein</keyword>
<protein>
    <recommendedName>
        <fullName evidence="1">Phosphoglucosamine mutase</fullName>
        <ecNumber evidence="1">5.4.2.10</ecNumber>
    </recommendedName>
</protein>
<name>GLMM_XANE5</name>
<gene>
    <name evidence="1" type="primary">glmM</name>
    <name type="ordered locus">XCV2863</name>
</gene>
<sequence length="449" mass="47124">MSARKYFGTDGIRGRVGQGVISADFVLRLGNALGRVLTQGRSKRPLVLIGKDTRISGYMFEAALEAGLVAAGADVQLIGPMPTPAIAFLTSTLRADAGVVISASHNPHYDNGIKFFSAEGEKLDDATEAAIEAALDEPFHTVESERLGKAIRTRDAIGRYIEFCKASVARGFTLHGLKMVLDCAHGATYHIAPMLFRELGAEVVVIGAAPDGLNINAGVGSTHIDNLAAKVRECGAHLGIAFDGDGDRVLMADDQGNPVDGDDLLYVLARSWQASGRLTGTVVGTLMTNYGLEQALAALHIPFQRAKVGDRYVHQALVEGGGTLGGETSGHLLCLDRASTGDGIVSALQVLEALGRDGQSLREALASLSKVPQKTVNVRLDGGTAKAIVEAVNVQQALQQAQAAVQGRGRAFLRPSGTEPVVRVTVEADDAGLMQDTLDRLSGAVRDAA</sequence>
<accession>Q3BRL9</accession>
<comment type="function">
    <text evidence="1">Catalyzes the conversion of glucosamine-6-phosphate to glucosamine-1-phosphate.</text>
</comment>
<comment type="catalytic activity">
    <reaction evidence="1">
        <text>alpha-D-glucosamine 1-phosphate = D-glucosamine 6-phosphate</text>
        <dbReference type="Rhea" id="RHEA:23424"/>
        <dbReference type="ChEBI" id="CHEBI:58516"/>
        <dbReference type="ChEBI" id="CHEBI:58725"/>
        <dbReference type="EC" id="5.4.2.10"/>
    </reaction>
</comment>
<comment type="cofactor">
    <cofactor evidence="1">
        <name>Mg(2+)</name>
        <dbReference type="ChEBI" id="CHEBI:18420"/>
    </cofactor>
    <text evidence="1">Binds 1 Mg(2+) ion per subunit.</text>
</comment>
<comment type="PTM">
    <text evidence="1">Activated by phosphorylation.</text>
</comment>
<comment type="similarity">
    <text evidence="1">Belongs to the phosphohexose mutase family.</text>
</comment>
<proteinExistence type="inferred from homology"/>
<feature type="chain" id="PRO_0000148006" description="Phosphoglucosamine mutase">
    <location>
        <begin position="1"/>
        <end position="449"/>
    </location>
</feature>
<feature type="active site" description="Phosphoserine intermediate" evidence="1">
    <location>
        <position position="104"/>
    </location>
</feature>
<feature type="binding site" description="via phosphate group" evidence="1">
    <location>
        <position position="104"/>
    </location>
    <ligand>
        <name>Mg(2+)</name>
        <dbReference type="ChEBI" id="CHEBI:18420"/>
    </ligand>
</feature>
<feature type="binding site" evidence="1">
    <location>
        <position position="243"/>
    </location>
    <ligand>
        <name>Mg(2+)</name>
        <dbReference type="ChEBI" id="CHEBI:18420"/>
    </ligand>
</feature>
<feature type="binding site" evidence="1">
    <location>
        <position position="245"/>
    </location>
    <ligand>
        <name>Mg(2+)</name>
        <dbReference type="ChEBI" id="CHEBI:18420"/>
    </ligand>
</feature>
<feature type="binding site" evidence="1">
    <location>
        <position position="247"/>
    </location>
    <ligand>
        <name>Mg(2+)</name>
        <dbReference type="ChEBI" id="CHEBI:18420"/>
    </ligand>
</feature>
<feature type="modified residue" description="Phosphoserine" evidence="1">
    <location>
        <position position="104"/>
    </location>
</feature>
<organism>
    <name type="scientific">Xanthomonas euvesicatoria pv. vesicatoria (strain 85-10)</name>
    <name type="common">Xanthomonas campestris pv. vesicatoria</name>
    <dbReference type="NCBI Taxonomy" id="316273"/>
    <lineage>
        <taxon>Bacteria</taxon>
        <taxon>Pseudomonadati</taxon>
        <taxon>Pseudomonadota</taxon>
        <taxon>Gammaproteobacteria</taxon>
        <taxon>Lysobacterales</taxon>
        <taxon>Lysobacteraceae</taxon>
        <taxon>Xanthomonas</taxon>
    </lineage>
</organism>
<evidence type="ECO:0000255" key="1">
    <source>
        <dbReference type="HAMAP-Rule" id="MF_01554"/>
    </source>
</evidence>
<dbReference type="EC" id="5.4.2.10" evidence="1"/>
<dbReference type="EMBL" id="AM039952">
    <property type="protein sequence ID" value="CAJ24542.1"/>
    <property type="molecule type" value="Genomic_DNA"/>
</dbReference>
<dbReference type="RefSeq" id="WP_011347948.1">
    <property type="nucleotide sequence ID" value="NZ_CP017190.1"/>
</dbReference>
<dbReference type="SMR" id="Q3BRL9"/>
<dbReference type="STRING" id="456327.BJD11_08545"/>
<dbReference type="GeneID" id="97511001"/>
<dbReference type="KEGG" id="xcv:XCV2863"/>
<dbReference type="eggNOG" id="COG1109">
    <property type="taxonomic scope" value="Bacteria"/>
</dbReference>
<dbReference type="HOGENOM" id="CLU_016950_7_0_6"/>
<dbReference type="Proteomes" id="UP000007069">
    <property type="component" value="Chromosome"/>
</dbReference>
<dbReference type="GO" id="GO:0005829">
    <property type="term" value="C:cytosol"/>
    <property type="evidence" value="ECO:0007669"/>
    <property type="project" value="TreeGrafter"/>
</dbReference>
<dbReference type="GO" id="GO:0000287">
    <property type="term" value="F:magnesium ion binding"/>
    <property type="evidence" value="ECO:0007669"/>
    <property type="project" value="UniProtKB-UniRule"/>
</dbReference>
<dbReference type="GO" id="GO:0008966">
    <property type="term" value="F:phosphoglucosamine mutase activity"/>
    <property type="evidence" value="ECO:0007669"/>
    <property type="project" value="UniProtKB-UniRule"/>
</dbReference>
<dbReference type="GO" id="GO:0004615">
    <property type="term" value="F:phosphomannomutase activity"/>
    <property type="evidence" value="ECO:0007669"/>
    <property type="project" value="TreeGrafter"/>
</dbReference>
<dbReference type="GO" id="GO:0005975">
    <property type="term" value="P:carbohydrate metabolic process"/>
    <property type="evidence" value="ECO:0007669"/>
    <property type="project" value="InterPro"/>
</dbReference>
<dbReference type="GO" id="GO:0009252">
    <property type="term" value="P:peptidoglycan biosynthetic process"/>
    <property type="evidence" value="ECO:0007669"/>
    <property type="project" value="TreeGrafter"/>
</dbReference>
<dbReference type="GO" id="GO:0006048">
    <property type="term" value="P:UDP-N-acetylglucosamine biosynthetic process"/>
    <property type="evidence" value="ECO:0007669"/>
    <property type="project" value="TreeGrafter"/>
</dbReference>
<dbReference type="CDD" id="cd05802">
    <property type="entry name" value="GlmM"/>
    <property type="match status" value="1"/>
</dbReference>
<dbReference type="FunFam" id="3.30.310.50:FF:000001">
    <property type="entry name" value="Phosphoglucosamine mutase"/>
    <property type="match status" value="1"/>
</dbReference>
<dbReference type="FunFam" id="3.40.120.10:FF:000001">
    <property type="entry name" value="Phosphoglucosamine mutase"/>
    <property type="match status" value="1"/>
</dbReference>
<dbReference type="FunFam" id="3.40.120.10:FF:000003">
    <property type="entry name" value="Phosphoglucosamine mutase"/>
    <property type="match status" value="1"/>
</dbReference>
<dbReference type="Gene3D" id="3.40.120.10">
    <property type="entry name" value="Alpha-D-Glucose-1,6-Bisphosphate, subunit A, domain 3"/>
    <property type="match status" value="3"/>
</dbReference>
<dbReference type="Gene3D" id="3.30.310.50">
    <property type="entry name" value="Alpha-D-phosphohexomutase, C-terminal domain"/>
    <property type="match status" value="1"/>
</dbReference>
<dbReference type="HAMAP" id="MF_01554_B">
    <property type="entry name" value="GlmM_B"/>
    <property type="match status" value="1"/>
</dbReference>
<dbReference type="InterPro" id="IPR005844">
    <property type="entry name" value="A-D-PHexomutase_a/b/a-I"/>
</dbReference>
<dbReference type="InterPro" id="IPR016055">
    <property type="entry name" value="A-D-PHexomutase_a/b/a-I/II/III"/>
</dbReference>
<dbReference type="InterPro" id="IPR005845">
    <property type="entry name" value="A-D-PHexomutase_a/b/a-II"/>
</dbReference>
<dbReference type="InterPro" id="IPR005846">
    <property type="entry name" value="A-D-PHexomutase_a/b/a-III"/>
</dbReference>
<dbReference type="InterPro" id="IPR005843">
    <property type="entry name" value="A-D-PHexomutase_C"/>
</dbReference>
<dbReference type="InterPro" id="IPR036900">
    <property type="entry name" value="A-D-PHexomutase_C_sf"/>
</dbReference>
<dbReference type="InterPro" id="IPR016066">
    <property type="entry name" value="A-D-PHexomutase_CS"/>
</dbReference>
<dbReference type="InterPro" id="IPR005841">
    <property type="entry name" value="Alpha-D-phosphohexomutase_SF"/>
</dbReference>
<dbReference type="InterPro" id="IPR006352">
    <property type="entry name" value="GlmM_bact"/>
</dbReference>
<dbReference type="InterPro" id="IPR050060">
    <property type="entry name" value="Phosphoglucosamine_mutase"/>
</dbReference>
<dbReference type="NCBIfam" id="TIGR01455">
    <property type="entry name" value="glmM"/>
    <property type="match status" value="1"/>
</dbReference>
<dbReference type="NCBIfam" id="NF008139">
    <property type="entry name" value="PRK10887.1"/>
    <property type="match status" value="1"/>
</dbReference>
<dbReference type="PANTHER" id="PTHR42946:SF1">
    <property type="entry name" value="PHOSPHOGLUCOMUTASE (ALPHA-D-GLUCOSE-1,6-BISPHOSPHATE-DEPENDENT)"/>
    <property type="match status" value="1"/>
</dbReference>
<dbReference type="PANTHER" id="PTHR42946">
    <property type="entry name" value="PHOSPHOHEXOSE MUTASE"/>
    <property type="match status" value="1"/>
</dbReference>
<dbReference type="Pfam" id="PF02878">
    <property type="entry name" value="PGM_PMM_I"/>
    <property type="match status" value="1"/>
</dbReference>
<dbReference type="Pfam" id="PF02879">
    <property type="entry name" value="PGM_PMM_II"/>
    <property type="match status" value="1"/>
</dbReference>
<dbReference type="Pfam" id="PF02880">
    <property type="entry name" value="PGM_PMM_III"/>
    <property type="match status" value="1"/>
</dbReference>
<dbReference type="Pfam" id="PF00408">
    <property type="entry name" value="PGM_PMM_IV"/>
    <property type="match status" value="1"/>
</dbReference>
<dbReference type="PRINTS" id="PR00509">
    <property type="entry name" value="PGMPMM"/>
</dbReference>
<dbReference type="SUPFAM" id="SSF55957">
    <property type="entry name" value="Phosphoglucomutase, C-terminal domain"/>
    <property type="match status" value="1"/>
</dbReference>
<dbReference type="SUPFAM" id="SSF53738">
    <property type="entry name" value="Phosphoglucomutase, first 3 domains"/>
    <property type="match status" value="3"/>
</dbReference>
<dbReference type="PROSITE" id="PS00710">
    <property type="entry name" value="PGM_PMM"/>
    <property type="match status" value="1"/>
</dbReference>